<keyword id="KW-1185">Reference proteome</keyword>
<comment type="similarity">
    <text evidence="1">Belongs to the nitrobindin family.</text>
</comment>
<comment type="caution">
    <text evidence="3">Lacks the conserved His residue that binds heme iron in the nitrobindin family.</text>
</comment>
<gene>
    <name type="ordered locus">cu1611</name>
</gene>
<dbReference type="EMBL" id="AM942444">
    <property type="protein sequence ID" value="CAQ05571.1"/>
    <property type="molecule type" value="Genomic_DNA"/>
</dbReference>
<dbReference type="RefSeq" id="WP_012360847.1">
    <property type="nucleotide sequence ID" value="NC_010545.1"/>
</dbReference>
<dbReference type="SMR" id="B1VII7"/>
<dbReference type="STRING" id="504474.cu1611"/>
<dbReference type="KEGG" id="cur:cu1611"/>
<dbReference type="eggNOG" id="COG4044">
    <property type="taxonomic scope" value="Bacteria"/>
</dbReference>
<dbReference type="HOGENOM" id="CLU_085483_0_0_11"/>
<dbReference type="Proteomes" id="UP000001727">
    <property type="component" value="Chromosome"/>
</dbReference>
<dbReference type="CDD" id="cd07828">
    <property type="entry name" value="lipocalin_heme-bd-THAP4-like"/>
    <property type="match status" value="1"/>
</dbReference>
<dbReference type="Gene3D" id="2.40.128.20">
    <property type="match status" value="1"/>
</dbReference>
<dbReference type="HAMAP" id="MF_01297">
    <property type="entry name" value="nitrobindin"/>
    <property type="match status" value="1"/>
</dbReference>
<dbReference type="InterPro" id="IPR012674">
    <property type="entry name" value="Calycin"/>
</dbReference>
<dbReference type="InterPro" id="IPR022939">
    <property type="entry name" value="Nb(III)_bact/plant"/>
</dbReference>
<dbReference type="InterPro" id="IPR045165">
    <property type="entry name" value="Nitrobindin"/>
</dbReference>
<dbReference type="InterPro" id="IPR014878">
    <property type="entry name" value="THAP4-like_heme-bd"/>
</dbReference>
<dbReference type="PANTHER" id="PTHR15854:SF4">
    <property type="entry name" value="PEROXYNITRITE ISOMERASE THAP4"/>
    <property type="match status" value="1"/>
</dbReference>
<dbReference type="PANTHER" id="PTHR15854">
    <property type="entry name" value="THAP4 PROTEIN"/>
    <property type="match status" value="1"/>
</dbReference>
<dbReference type="Pfam" id="PF08768">
    <property type="entry name" value="THAP4_heme-bd"/>
    <property type="match status" value="1"/>
</dbReference>
<dbReference type="SUPFAM" id="SSF50814">
    <property type="entry name" value="Lipocalins"/>
    <property type="match status" value="1"/>
</dbReference>
<reference key="1">
    <citation type="journal article" date="2008" name="J. Biotechnol.">
        <title>The lifestyle of Corynebacterium urealyticum derived from its complete genome sequence established by pyrosequencing.</title>
        <authorList>
            <person name="Tauch A."/>
            <person name="Trost E."/>
            <person name="Tilker A."/>
            <person name="Ludewig U."/>
            <person name="Schneiker S."/>
            <person name="Goesmann A."/>
            <person name="Arnold W."/>
            <person name="Bekel T."/>
            <person name="Brinkrolf K."/>
            <person name="Brune I."/>
            <person name="Goetker S."/>
            <person name="Kalinowski J."/>
            <person name="Kamp P.-B."/>
            <person name="Lobo F.P."/>
            <person name="Viehoever P."/>
            <person name="Weisshaar B."/>
            <person name="Soriano F."/>
            <person name="Droege M."/>
            <person name="Puehler A."/>
        </authorList>
    </citation>
    <scope>NUCLEOTIDE SEQUENCE [LARGE SCALE GENOMIC DNA]</scope>
    <source>
        <strain>ATCC 43042 / DSM 7109</strain>
    </source>
</reference>
<accession>B1VII7</accession>
<proteinExistence type="inferred from homology"/>
<organism>
    <name type="scientific">Corynebacterium urealyticum (strain ATCC 43042 / DSM 7109)</name>
    <dbReference type="NCBI Taxonomy" id="504474"/>
    <lineage>
        <taxon>Bacteria</taxon>
        <taxon>Bacillati</taxon>
        <taxon>Actinomycetota</taxon>
        <taxon>Actinomycetes</taxon>
        <taxon>Mycobacteriales</taxon>
        <taxon>Corynebacteriaceae</taxon>
        <taxon>Corynebacterium</taxon>
    </lineage>
</organism>
<name>NBLIK_CORU7</name>
<sequence length="248" mass="26831">MSSDKANNQSPDQGANTPAESTNSGPKLDGNQAVNLAAEQSKSTADKNLPVFGDLPIPEDTANLRFGPNLHDGLLALLPLVGVWRGQGQAAHPGEEEFTFGQQLSIFHDGENRLGFESRTWKINPPAEEGAEADGDEASAESAGEPEVGELLRREAGFWRIDNDDNIELLIAHSDGMIELMYGKPLTERAWQLESASTLATETGPSALGPGKRLYGLMPNNDLGWVDERLIDGEMVPWMSAQLKRVRG</sequence>
<protein>
    <recommendedName>
        <fullName evidence="3">Ferric nitrobindin-like protein</fullName>
    </recommendedName>
</protein>
<evidence type="ECO:0000255" key="1">
    <source>
        <dbReference type="HAMAP-Rule" id="MF_01297"/>
    </source>
</evidence>
<evidence type="ECO:0000256" key="2">
    <source>
        <dbReference type="SAM" id="MobiDB-lite"/>
    </source>
</evidence>
<evidence type="ECO:0000305" key="3"/>
<feature type="chain" id="PRO_0000356904" description="Ferric nitrobindin-like protein">
    <location>
        <begin position="1"/>
        <end position="248"/>
    </location>
</feature>
<feature type="region of interest" description="Disordered" evidence="2">
    <location>
        <begin position="1"/>
        <end position="49"/>
    </location>
</feature>
<feature type="region of interest" description="Disordered" evidence="2">
    <location>
        <begin position="118"/>
        <end position="147"/>
    </location>
</feature>
<feature type="short sequence motif" description="GXWXGXG" evidence="1">
    <location>
        <begin position="82"/>
        <end position="88"/>
    </location>
</feature>
<feature type="compositionally biased region" description="Polar residues" evidence="2">
    <location>
        <begin position="1"/>
        <end position="25"/>
    </location>
</feature>
<feature type="compositionally biased region" description="Polar residues" evidence="2">
    <location>
        <begin position="32"/>
        <end position="43"/>
    </location>
</feature>
<feature type="compositionally biased region" description="Acidic residues" evidence="2">
    <location>
        <begin position="129"/>
        <end position="139"/>
    </location>
</feature>